<accession>B3DQC9</accession>
<feature type="chain" id="PRO_1000143944" description="Large ribosomal subunit protein uL6">
    <location>
        <begin position="1"/>
        <end position="179"/>
    </location>
</feature>
<protein>
    <recommendedName>
        <fullName evidence="1">Large ribosomal subunit protein uL6</fullName>
    </recommendedName>
    <alternativeName>
        <fullName evidence="2">50S ribosomal protein L6</fullName>
    </alternativeName>
</protein>
<gene>
    <name evidence="1" type="primary">rplF</name>
    <name type="ordered locus">BLD_1722</name>
</gene>
<proteinExistence type="inferred from homology"/>
<keyword id="KW-0687">Ribonucleoprotein</keyword>
<keyword id="KW-0689">Ribosomal protein</keyword>
<keyword id="KW-0694">RNA-binding</keyword>
<keyword id="KW-0699">rRNA-binding</keyword>
<dbReference type="EMBL" id="CP000605">
    <property type="protein sequence ID" value="ACD99167.1"/>
    <property type="molecule type" value="Genomic_DNA"/>
</dbReference>
<dbReference type="RefSeq" id="WP_007053040.1">
    <property type="nucleotide sequence ID" value="NZ_AABM02000025.1"/>
</dbReference>
<dbReference type="SMR" id="B3DQC9"/>
<dbReference type="GeneID" id="69578882"/>
<dbReference type="KEGG" id="blj:BLD_1722"/>
<dbReference type="HOGENOM" id="CLU_065464_1_2_11"/>
<dbReference type="Proteomes" id="UP000002419">
    <property type="component" value="Chromosome"/>
</dbReference>
<dbReference type="GO" id="GO:0022625">
    <property type="term" value="C:cytosolic large ribosomal subunit"/>
    <property type="evidence" value="ECO:0007669"/>
    <property type="project" value="TreeGrafter"/>
</dbReference>
<dbReference type="GO" id="GO:0019843">
    <property type="term" value="F:rRNA binding"/>
    <property type="evidence" value="ECO:0007669"/>
    <property type="project" value="UniProtKB-UniRule"/>
</dbReference>
<dbReference type="GO" id="GO:0003735">
    <property type="term" value="F:structural constituent of ribosome"/>
    <property type="evidence" value="ECO:0007669"/>
    <property type="project" value="InterPro"/>
</dbReference>
<dbReference type="GO" id="GO:0002181">
    <property type="term" value="P:cytoplasmic translation"/>
    <property type="evidence" value="ECO:0007669"/>
    <property type="project" value="TreeGrafter"/>
</dbReference>
<dbReference type="FunFam" id="3.90.930.12:FF:000001">
    <property type="entry name" value="50S ribosomal protein L6"/>
    <property type="match status" value="1"/>
</dbReference>
<dbReference type="Gene3D" id="3.90.930.12">
    <property type="entry name" value="Ribosomal protein L6, alpha-beta domain"/>
    <property type="match status" value="2"/>
</dbReference>
<dbReference type="HAMAP" id="MF_01365_B">
    <property type="entry name" value="Ribosomal_uL6_B"/>
    <property type="match status" value="1"/>
</dbReference>
<dbReference type="InterPro" id="IPR000702">
    <property type="entry name" value="Ribosomal_uL6-like"/>
</dbReference>
<dbReference type="InterPro" id="IPR036789">
    <property type="entry name" value="Ribosomal_uL6-like_a/b-dom_sf"/>
</dbReference>
<dbReference type="InterPro" id="IPR020040">
    <property type="entry name" value="Ribosomal_uL6_a/b-dom"/>
</dbReference>
<dbReference type="InterPro" id="IPR019906">
    <property type="entry name" value="Ribosomal_uL6_bac-type"/>
</dbReference>
<dbReference type="InterPro" id="IPR002358">
    <property type="entry name" value="Ribosomal_uL6_CS"/>
</dbReference>
<dbReference type="NCBIfam" id="TIGR03654">
    <property type="entry name" value="L6_bact"/>
    <property type="match status" value="1"/>
</dbReference>
<dbReference type="PANTHER" id="PTHR11655">
    <property type="entry name" value="60S/50S RIBOSOMAL PROTEIN L6/L9"/>
    <property type="match status" value="1"/>
</dbReference>
<dbReference type="PANTHER" id="PTHR11655:SF14">
    <property type="entry name" value="LARGE RIBOSOMAL SUBUNIT PROTEIN UL6M"/>
    <property type="match status" value="1"/>
</dbReference>
<dbReference type="Pfam" id="PF00347">
    <property type="entry name" value="Ribosomal_L6"/>
    <property type="match status" value="2"/>
</dbReference>
<dbReference type="PIRSF" id="PIRSF002162">
    <property type="entry name" value="Ribosomal_L6"/>
    <property type="match status" value="1"/>
</dbReference>
<dbReference type="PRINTS" id="PR00059">
    <property type="entry name" value="RIBOSOMALL6"/>
</dbReference>
<dbReference type="SUPFAM" id="SSF56053">
    <property type="entry name" value="Ribosomal protein L6"/>
    <property type="match status" value="2"/>
</dbReference>
<dbReference type="PROSITE" id="PS00525">
    <property type="entry name" value="RIBOSOMAL_L6_1"/>
    <property type="match status" value="1"/>
</dbReference>
<comment type="function">
    <text evidence="1">This protein binds to the 23S rRNA, and is important in its secondary structure. It is located near the subunit interface in the base of the L7/L12 stalk, and near the tRNA binding site of the peptidyltransferase center.</text>
</comment>
<comment type="subunit">
    <text evidence="1">Part of the 50S ribosomal subunit.</text>
</comment>
<comment type="similarity">
    <text evidence="1">Belongs to the universal ribosomal protein uL6 family.</text>
</comment>
<organism>
    <name type="scientific">Bifidobacterium longum (strain DJO10A)</name>
    <dbReference type="NCBI Taxonomy" id="205913"/>
    <lineage>
        <taxon>Bacteria</taxon>
        <taxon>Bacillati</taxon>
        <taxon>Actinomycetota</taxon>
        <taxon>Actinomycetes</taxon>
        <taxon>Bifidobacteriales</taxon>
        <taxon>Bifidobacteriaceae</taxon>
        <taxon>Bifidobacterium</taxon>
    </lineage>
</organism>
<name>RL6_BIFLD</name>
<sequence>MASHIGKLPIAIPAGVEVKIEGQNFSAKGAKGSDSYVVPEGITAAVEGNEIVLTAADDLRPTRAKHGLARSIMAGMVKGVHDGYSKTLEIVGTGYRAVAKGQGIEFFLGYSHTITVNPPEGITLKVTDANHVVVEGTDKQVVGQVAANIRKLRAPEPYKGKGIKYSDERILRKAGKAGK</sequence>
<evidence type="ECO:0000255" key="1">
    <source>
        <dbReference type="HAMAP-Rule" id="MF_01365"/>
    </source>
</evidence>
<evidence type="ECO:0000305" key="2"/>
<reference key="1">
    <citation type="journal article" date="2008" name="BMC Genomics">
        <title>Comparative genomic analysis of the gut bacterium Bifidobacterium longum reveals loci susceptible to deletion during pure culture growth.</title>
        <authorList>
            <person name="Lee J.H."/>
            <person name="Karamychev V.N."/>
            <person name="Kozyavkin S.A."/>
            <person name="Mills D."/>
            <person name="Pavlov A.R."/>
            <person name="Pavlova N.V."/>
            <person name="Polouchine N.N."/>
            <person name="Richardson P.M."/>
            <person name="Shakhova V.V."/>
            <person name="Slesarev A.I."/>
            <person name="Weimer B."/>
            <person name="O'Sullivan D.J."/>
        </authorList>
    </citation>
    <scope>NUCLEOTIDE SEQUENCE [LARGE SCALE GENOMIC DNA]</scope>
    <source>
        <strain>DJO10A</strain>
    </source>
</reference>